<organism>
    <name type="scientific">Shewanella baltica (strain OS185)</name>
    <dbReference type="NCBI Taxonomy" id="402882"/>
    <lineage>
        <taxon>Bacteria</taxon>
        <taxon>Pseudomonadati</taxon>
        <taxon>Pseudomonadota</taxon>
        <taxon>Gammaproteobacteria</taxon>
        <taxon>Alteromonadales</taxon>
        <taxon>Shewanellaceae</taxon>
        <taxon>Shewanella</taxon>
    </lineage>
</organism>
<name>CLPP_SHEB8</name>
<dbReference type="EC" id="3.4.21.92" evidence="1"/>
<dbReference type="EMBL" id="CP000753">
    <property type="protein sequence ID" value="ABS07740.1"/>
    <property type="molecule type" value="Genomic_DNA"/>
</dbReference>
<dbReference type="RefSeq" id="WP_006081124.1">
    <property type="nucleotide sequence ID" value="NC_009665.1"/>
</dbReference>
<dbReference type="SMR" id="A6WLQ1"/>
<dbReference type="MEROPS" id="S14.001"/>
<dbReference type="GeneID" id="11771862"/>
<dbReference type="KEGG" id="sbm:Shew185_1593"/>
<dbReference type="HOGENOM" id="CLU_058707_3_2_6"/>
<dbReference type="GO" id="GO:0005737">
    <property type="term" value="C:cytoplasm"/>
    <property type="evidence" value="ECO:0007669"/>
    <property type="project" value="UniProtKB-SubCell"/>
</dbReference>
<dbReference type="GO" id="GO:0009368">
    <property type="term" value="C:endopeptidase Clp complex"/>
    <property type="evidence" value="ECO:0007669"/>
    <property type="project" value="TreeGrafter"/>
</dbReference>
<dbReference type="GO" id="GO:0004176">
    <property type="term" value="F:ATP-dependent peptidase activity"/>
    <property type="evidence" value="ECO:0007669"/>
    <property type="project" value="InterPro"/>
</dbReference>
<dbReference type="GO" id="GO:0051117">
    <property type="term" value="F:ATPase binding"/>
    <property type="evidence" value="ECO:0007669"/>
    <property type="project" value="TreeGrafter"/>
</dbReference>
<dbReference type="GO" id="GO:0004252">
    <property type="term" value="F:serine-type endopeptidase activity"/>
    <property type="evidence" value="ECO:0007669"/>
    <property type="project" value="UniProtKB-UniRule"/>
</dbReference>
<dbReference type="GO" id="GO:0006515">
    <property type="term" value="P:protein quality control for misfolded or incompletely synthesized proteins"/>
    <property type="evidence" value="ECO:0007669"/>
    <property type="project" value="TreeGrafter"/>
</dbReference>
<dbReference type="CDD" id="cd07017">
    <property type="entry name" value="S14_ClpP_2"/>
    <property type="match status" value="1"/>
</dbReference>
<dbReference type="FunFam" id="3.90.226.10:FF:000001">
    <property type="entry name" value="ATP-dependent Clp protease proteolytic subunit"/>
    <property type="match status" value="1"/>
</dbReference>
<dbReference type="Gene3D" id="3.90.226.10">
    <property type="entry name" value="2-enoyl-CoA Hydratase, Chain A, domain 1"/>
    <property type="match status" value="1"/>
</dbReference>
<dbReference type="HAMAP" id="MF_00444">
    <property type="entry name" value="ClpP"/>
    <property type="match status" value="1"/>
</dbReference>
<dbReference type="InterPro" id="IPR001907">
    <property type="entry name" value="ClpP"/>
</dbReference>
<dbReference type="InterPro" id="IPR029045">
    <property type="entry name" value="ClpP/crotonase-like_dom_sf"/>
</dbReference>
<dbReference type="InterPro" id="IPR023562">
    <property type="entry name" value="ClpP/TepA"/>
</dbReference>
<dbReference type="InterPro" id="IPR033135">
    <property type="entry name" value="ClpP_His_AS"/>
</dbReference>
<dbReference type="InterPro" id="IPR018215">
    <property type="entry name" value="ClpP_Ser_AS"/>
</dbReference>
<dbReference type="NCBIfam" id="TIGR00493">
    <property type="entry name" value="clpP"/>
    <property type="match status" value="1"/>
</dbReference>
<dbReference type="NCBIfam" id="NF001368">
    <property type="entry name" value="PRK00277.1"/>
    <property type="match status" value="1"/>
</dbReference>
<dbReference type="NCBIfam" id="NF009205">
    <property type="entry name" value="PRK12553.1"/>
    <property type="match status" value="1"/>
</dbReference>
<dbReference type="PANTHER" id="PTHR10381">
    <property type="entry name" value="ATP-DEPENDENT CLP PROTEASE PROTEOLYTIC SUBUNIT"/>
    <property type="match status" value="1"/>
</dbReference>
<dbReference type="PANTHER" id="PTHR10381:SF70">
    <property type="entry name" value="ATP-DEPENDENT CLP PROTEASE PROTEOLYTIC SUBUNIT"/>
    <property type="match status" value="1"/>
</dbReference>
<dbReference type="Pfam" id="PF00574">
    <property type="entry name" value="CLP_protease"/>
    <property type="match status" value="1"/>
</dbReference>
<dbReference type="PRINTS" id="PR00127">
    <property type="entry name" value="CLPPROTEASEP"/>
</dbReference>
<dbReference type="SUPFAM" id="SSF52096">
    <property type="entry name" value="ClpP/crotonase"/>
    <property type="match status" value="1"/>
</dbReference>
<dbReference type="PROSITE" id="PS00382">
    <property type="entry name" value="CLP_PROTEASE_HIS"/>
    <property type="match status" value="1"/>
</dbReference>
<dbReference type="PROSITE" id="PS00381">
    <property type="entry name" value="CLP_PROTEASE_SER"/>
    <property type="match status" value="1"/>
</dbReference>
<accession>A6WLQ1</accession>
<evidence type="ECO:0000255" key="1">
    <source>
        <dbReference type="HAMAP-Rule" id="MF_00444"/>
    </source>
</evidence>
<protein>
    <recommendedName>
        <fullName evidence="1">ATP-dependent Clp protease proteolytic subunit</fullName>
        <ecNumber evidence="1">3.4.21.92</ecNumber>
    </recommendedName>
    <alternativeName>
        <fullName evidence="1">Endopeptidase Clp</fullName>
    </alternativeName>
</protein>
<sequence length="202" mass="22137">MHNASDIQSALVPMVIEQTAKGERSYDIYSRLLKERIIFLVGQVEEHMANLIVAQLLFLESESPDKDIFLYINSPGGSVTAGMAIYDTMQFIKPNVSTVCIGQAASMGAFLLAGGEKGKRHCLPNSRVMIHQPLGGFQGQASDIAIHAKEILGIKNKLNQMLAEHTGQPLEVVERDTDRDNFMSATQAVEYGLVDSVMTKRG</sequence>
<reference key="1">
    <citation type="submission" date="2007-07" db="EMBL/GenBank/DDBJ databases">
        <title>Complete sequence of chromosome of Shewanella baltica OS185.</title>
        <authorList>
            <consortium name="US DOE Joint Genome Institute"/>
            <person name="Copeland A."/>
            <person name="Lucas S."/>
            <person name="Lapidus A."/>
            <person name="Barry K."/>
            <person name="Glavina del Rio T."/>
            <person name="Dalin E."/>
            <person name="Tice H."/>
            <person name="Pitluck S."/>
            <person name="Sims D."/>
            <person name="Brettin T."/>
            <person name="Bruce D."/>
            <person name="Detter J.C."/>
            <person name="Han C."/>
            <person name="Schmutz J."/>
            <person name="Larimer F."/>
            <person name="Land M."/>
            <person name="Hauser L."/>
            <person name="Kyrpides N."/>
            <person name="Mikhailova N."/>
            <person name="Brettar I."/>
            <person name="Rodrigues J."/>
            <person name="Konstantinidis K."/>
            <person name="Tiedje J."/>
            <person name="Richardson P."/>
        </authorList>
    </citation>
    <scope>NUCLEOTIDE SEQUENCE [LARGE SCALE GENOMIC DNA]</scope>
    <source>
        <strain>OS185</strain>
    </source>
</reference>
<feature type="chain" id="PRO_1000026126" description="ATP-dependent Clp protease proteolytic subunit">
    <location>
        <begin position="1"/>
        <end position="202"/>
    </location>
</feature>
<feature type="active site" description="Nucleophile" evidence="1">
    <location>
        <position position="106"/>
    </location>
</feature>
<feature type="active site" evidence="1">
    <location>
        <position position="131"/>
    </location>
</feature>
<gene>
    <name evidence="1" type="primary">clpP</name>
    <name type="ordered locus">Shew185_1593</name>
</gene>
<comment type="function">
    <text evidence="1">Cleaves peptides in various proteins in a process that requires ATP hydrolysis. Has a chymotrypsin-like activity. Plays a major role in the degradation of misfolded proteins.</text>
</comment>
<comment type="catalytic activity">
    <reaction evidence="1">
        <text>Hydrolysis of proteins to small peptides in the presence of ATP and magnesium. alpha-casein is the usual test substrate. In the absence of ATP, only oligopeptides shorter than five residues are hydrolyzed (such as succinyl-Leu-Tyr-|-NHMec, and Leu-Tyr-Leu-|-Tyr-Trp, in which cleavage of the -Tyr-|-Leu- and -Tyr-|-Trp bonds also occurs).</text>
        <dbReference type="EC" id="3.4.21.92"/>
    </reaction>
</comment>
<comment type="subunit">
    <text evidence="1">Fourteen ClpP subunits assemble into 2 heptameric rings which stack back to back to give a disk-like structure with a central cavity, resembling the structure of eukaryotic proteasomes.</text>
</comment>
<comment type="subcellular location">
    <subcellularLocation>
        <location evidence="1">Cytoplasm</location>
    </subcellularLocation>
</comment>
<comment type="similarity">
    <text evidence="1">Belongs to the peptidase S14 family.</text>
</comment>
<proteinExistence type="inferred from homology"/>
<keyword id="KW-0963">Cytoplasm</keyword>
<keyword id="KW-0378">Hydrolase</keyword>
<keyword id="KW-0645">Protease</keyword>
<keyword id="KW-0720">Serine protease</keyword>